<organism>
    <name type="scientific">Staphylococcus aureus (strain COL)</name>
    <dbReference type="NCBI Taxonomy" id="93062"/>
    <lineage>
        <taxon>Bacteria</taxon>
        <taxon>Bacillati</taxon>
        <taxon>Bacillota</taxon>
        <taxon>Bacilli</taxon>
        <taxon>Bacillales</taxon>
        <taxon>Staphylococcaceae</taxon>
        <taxon>Staphylococcus</taxon>
    </lineage>
</organism>
<dbReference type="EC" id="2.7.8.-"/>
<dbReference type="EMBL" id="CP000046">
    <property type="protein sequence ID" value="AAW37835.1"/>
    <property type="molecule type" value="Genomic_DNA"/>
</dbReference>
<dbReference type="RefSeq" id="WP_000098285.1">
    <property type="nucleotide sequence ID" value="NZ_JBGOFO010000005.1"/>
</dbReference>
<dbReference type="SMR" id="Q5HHV4"/>
<dbReference type="KEGG" id="sac:SACOL0778"/>
<dbReference type="HOGENOM" id="CLU_021310_0_0_9"/>
<dbReference type="UniPathway" id="UPA00556"/>
<dbReference type="Proteomes" id="UP000000530">
    <property type="component" value="Chromosome"/>
</dbReference>
<dbReference type="GO" id="GO:0005576">
    <property type="term" value="C:extracellular region"/>
    <property type="evidence" value="ECO:0007669"/>
    <property type="project" value="UniProtKB-SubCell"/>
</dbReference>
<dbReference type="GO" id="GO:0005886">
    <property type="term" value="C:plasma membrane"/>
    <property type="evidence" value="ECO:0007669"/>
    <property type="project" value="UniProtKB-SubCell"/>
</dbReference>
<dbReference type="GO" id="GO:0046872">
    <property type="term" value="F:metal ion binding"/>
    <property type="evidence" value="ECO:0007669"/>
    <property type="project" value="UniProtKB-KW"/>
</dbReference>
<dbReference type="GO" id="GO:0016740">
    <property type="term" value="F:transferase activity"/>
    <property type="evidence" value="ECO:0007669"/>
    <property type="project" value="UniProtKB-KW"/>
</dbReference>
<dbReference type="GO" id="GO:0071555">
    <property type="term" value="P:cell wall organization"/>
    <property type="evidence" value="ECO:0007669"/>
    <property type="project" value="UniProtKB-KW"/>
</dbReference>
<dbReference type="GO" id="GO:0070395">
    <property type="term" value="P:lipoteichoic acid biosynthetic process"/>
    <property type="evidence" value="ECO:0007669"/>
    <property type="project" value="UniProtKB-UniPathway"/>
</dbReference>
<dbReference type="CDD" id="cd16015">
    <property type="entry name" value="LTA_synthase"/>
    <property type="match status" value="1"/>
</dbReference>
<dbReference type="Gene3D" id="3.30.1120.170">
    <property type="match status" value="1"/>
</dbReference>
<dbReference type="Gene3D" id="3.40.720.10">
    <property type="entry name" value="Alkaline Phosphatase, subunit A"/>
    <property type="match status" value="1"/>
</dbReference>
<dbReference type="InterPro" id="IPR017850">
    <property type="entry name" value="Alkaline_phosphatase_core_sf"/>
</dbReference>
<dbReference type="InterPro" id="IPR012160">
    <property type="entry name" value="LtaS-like"/>
</dbReference>
<dbReference type="InterPro" id="IPR050448">
    <property type="entry name" value="OpgB/LTA_synthase_biosynth"/>
</dbReference>
<dbReference type="InterPro" id="IPR000917">
    <property type="entry name" value="Sulfatase_N"/>
</dbReference>
<dbReference type="PANTHER" id="PTHR47371">
    <property type="entry name" value="LIPOTEICHOIC ACID SYNTHASE"/>
    <property type="match status" value="1"/>
</dbReference>
<dbReference type="PANTHER" id="PTHR47371:SF3">
    <property type="entry name" value="PHOSPHOGLYCEROL TRANSFERASE I"/>
    <property type="match status" value="1"/>
</dbReference>
<dbReference type="Pfam" id="PF00884">
    <property type="entry name" value="Sulfatase"/>
    <property type="match status" value="1"/>
</dbReference>
<dbReference type="PIRSF" id="PIRSF005091">
    <property type="entry name" value="Mmb_sulf_HI1246"/>
    <property type="match status" value="1"/>
</dbReference>
<dbReference type="SUPFAM" id="SSF53649">
    <property type="entry name" value="Alkaline phosphatase-like"/>
    <property type="match status" value="1"/>
</dbReference>
<keyword id="KW-1003">Cell membrane</keyword>
<keyword id="KW-0961">Cell wall biogenesis/degradation</keyword>
<keyword id="KW-0464">Manganese</keyword>
<keyword id="KW-0472">Membrane</keyword>
<keyword id="KW-0479">Metal-binding</keyword>
<keyword id="KW-0964">Secreted</keyword>
<keyword id="KW-0808">Transferase</keyword>
<keyword id="KW-0812">Transmembrane</keyword>
<keyword id="KW-1133">Transmembrane helix</keyword>
<protein>
    <recommendedName>
        <fullName>Lipoteichoic acid synthase</fullName>
    </recommendedName>
    <component>
        <recommendedName>
            <fullName>Glycerol phosphate lipoteichoic acid synthase</fullName>
            <shortName>LTA synthase</shortName>
            <ecNumber>2.7.8.-</ecNumber>
        </recommendedName>
        <alternativeName>
            <fullName>Polyglycerol phosphate synthase</fullName>
        </alternativeName>
    </component>
    <component>
        <recommendedName>
            <fullName>Processed glycerol phosphate lipoteichoic acid synthase</fullName>
        </recommendedName>
    </component>
</protein>
<reference key="1">
    <citation type="journal article" date="2005" name="J. Bacteriol.">
        <title>Insights on evolution of virulence and resistance from the complete genome analysis of an early methicillin-resistant Staphylococcus aureus strain and a biofilm-producing methicillin-resistant Staphylococcus epidermidis strain.</title>
        <authorList>
            <person name="Gill S.R."/>
            <person name="Fouts D.E."/>
            <person name="Archer G.L."/>
            <person name="Mongodin E.F."/>
            <person name="DeBoy R.T."/>
            <person name="Ravel J."/>
            <person name="Paulsen I.T."/>
            <person name="Kolonay J.F."/>
            <person name="Brinkac L.M."/>
            <person name="Beanan M.J."/>
            <person name="Dodson R.J."/>
            <person name="Daugherty S.C."/>
            <person name="Madupu R."/>
            <person name="Angiuoli S.V."/>
            <person name="Durkin A.S."/>
            <person name="Haft D.H."/>
            <person name="Vamathevan J.J."/>
            <person name="Khouri H."/>
            <person name="Utterback T.R."/>
            <person name="Lee C."/>
            <person name="Dimitrov G."/>
            <person name="Jiang L."/>
            <person name="Qin H."/>
            <person name="Weidman J."/>
            <person name="Tran K."/>
            <person name="Kang K.H."/>
            <person name="Hance I.R."/>
            <person name="Nelson K.E."/>
            <person name="Fraser C.M."/>
        </authorList>
    </citation>
    <scope>NUCLEOTIDE SEQUENCE [LARGE SCALE GENOMIC DNA]</scope>
    <source>
        <strain>COL</strain>
    </source>
</reference>
<gene>
    <name type="primary">ltaS</name>
    <name type="ordered locus">SACOL0778</name>
</gene>
<comment type="function">
    <text evidence="1">Catalyzes the polymerization of lipoteichoic acid (LTA) polyglycerol phosphate, a reaction that presumably uses phosphatidylglycerol (PG) as substrate. Is required for staphylococcal growth and cell division process (By similarity).</text>
</comment>
<comment type="pathway">
    <text>Cell wall biogenesis; lipoteichoic acid biosynthesis.</text>
</comment>
<comment type="subcellular location">
    <subcellularLocation>
        <location evidence="4">Cell membrane</location>
        <topology evidence="4">Multi-pass membrane protein</topology>
    </subcellularLocation>
</comment>
<comment type="subcellular location">
    <molecule>Processed glycerol phosphate lipoteichoic acid synthase</molecule>
    <subcellularLocation>
        <location evidence="1">Secreted</location>
    </subcellularLocation>
</comment>
<comment type="PTM">
    <text evidence="1">Proteolytically cleaved.</text>
</comment>
<comment type="similarity">
    <text evidence="4">Belongs to the LTA synthase family.</text>
</comment>
<evidence type="ECO:0000250" key="1"/>
<evidence type="ECO:0000255" key="2"/>
<evidence type="ECO:0000256" key="3">
    <source>
        <dbReference type="SAM" id="MobiDB-lite"/>
    </source>
</evidence>
<evidence type="ECO:0000305" key="4"/>
<sequence>MSSQKKKISLFAFFLLTVITITLKTYFSYYVDFSLGVKGLVQNLILLMNPYSLVALVLSVFLFFKGKKAFWFMFIGGFLLTFLLYANVVYFRFFSDFLTFSTLNQVGNVESMGGAVSASFKWYDFVYFIDTLVYLFILIFKTKWLDTKAFSKKFVPVVMAASVALFFLNLAFAETDRPELLTRTFDHKYLVKYLGPYNFTVYDGVKTIENNQQKALASEDDLTKVLNYTKQRQTEPNPEYYGVAKKKNIIKIHLESFQTFLINKKVNGKEVTPFLNKLSSGKEQFTYFPNFFHQTGQGKTSDSEFTMDNSLYGLPQGSAFSLKGDNTYQSLPAILDQKQGYKSDVMHGDYKTFWNRDQVYKHFGIDKFYDATYYDMSDKNVVNLGLKDKIFFKDSANYQAKMKSPFYSHLITLTNHYPFTLDEKDATIEKSNTGDATVDGYIQTARYLDEALEEYINDLKKKGLYDNSVIMIYGDHYGISENHNNAMEKLLGEKITPAKFTDLNRTGFWIKIPGKSGGINNEYAGQVDVMPTILHLAGIDTKNYLMFGTDLFSKGHNQVVPFRNGDFITKDYKYVNGKIYSNKNNELITTQPADFEKNKKQVEKDLEMSDNVLNGDLFRFYKNPDFKKVNPSKYKYETGPKANSKK</sequence>
<accession>Q5HHV4</accession>
<feature type="chain" id="PRO_0000305352" description="Glycerol phosphate lipoteichoic acid synthase">
    <location>
        <begin position="1"/>
        <end position="217"/>
    </location>
</feature>
<feature type="chain" id="PRO_0000305353" description="Processed glycerol phosphate lipoteichoic acid synthase">
    <location>
        <begin position="218"/>
        <end position="646"/>
    </location>
</feature>
<feature type="topological domain" description="Cytoplasmic" evidence="2">
    <location>
        <begin position="1"/>
        <end position="7"/>
    </location>
</feature>
<feature type="transmembrane region" description="Helical" evidence="2">
    <location>
        <begin position="8"/>
        <end position="28"/>
    </location>
</feature>
<feature type="topological domain" description="Extracellular" evidence="2">
    <location>
        <begin position="29"/>
        <end position="43"/>
    </location>
</feature>
<feature type="transmembrane region" description="Helical" evidence="2">
    <location>
        <begin position="44"/>
        <end position="64"/>
    </location>
</feature>
<feature type="topological domain" description="Cytoplasmic" evidence="2">
    <location>
        <begin position="65"/>
        <end position="68"/>
    </location>
</feature>
<feature type="transmembrane region" description="Helical" evidence="2">
    <location>
        <begin position="69"/>
        <end position="89"/>
    </location>
</feature>
<feature type="topological domain" description="Extracellular" evidence="2">
    <location>
        <begin position="90"/>
        <end position="119"/>
    </location>
</feature>
<feature type="transmembrane region" description="Helical" evidence="2">
    <location>
        <begin position="120"/>
        <end position="140"/>
    </location>
</feature>
<feature type="topological domain" description="Cytoplasmic" evidence="2">
    <location>
        <begin position="141"/>
        <end position="153"/>
    </location>
</feature>
<feature type="transmembrane region" description="Helical" evidence="2">
    <location>
        <begin position="154"/>
        <end position="174"/>
    </location>
</feature>
<feature type="topological domain" description="Extracellular" evidence="2">
    <location>
        <begin position="175"/>
        <end position="646"/>
    </location>
</feature>
<feature type="region of interest" description="Disordered" evidence="3">
    <location>
        <begin position="623"/>
        <end position="646"/>
    </location>
</feature>
<feature type="compositionally biased region" description="Basic and acidic residues" evidence="3">
    <location>
        <begin position="623"/>
        <end position="638"/>
    </location>
</feature>
<feature type="active site" evidence="1">
    <location>
        <position position="300"/>
    </location>
</feature>
<feature type="binding site" evidence="1">
    <location>
        <position position="255"/>
    </location>
    <ligand>
        <name>Mn(2+)</name>
        <dbReference type="ChEBI" id="CHEBI:29035"/>
    </ligand>
</feature>
<feature type="binding site" evidence="1">
    <location>
        <position position="300"/>
    </location>
    <ligand>
        <name>Mn(2+)</name>
        <dbReference type="ChEBI" id="CHEBI:29035"/>
    </ligand>
</feature>
<feature type="binding site" evidence="1">
    <location>
        <position position="416"/>
    </location>
    <ligand>
        <name>substrate</name>
    </ligand>
</feature>
<feature type="binding site" evidence="1">
    <location>
        <position position="475"/>
    </location>
    <ligand>
        <name>Mn(2+)</name>
        <dbReference type="ChEBI" id="CHEBI:29035"/>
    </ligand>
</feature>
<feature type="binding site" evidence="1">
    <location>
        <position position="476"/>
    </location>
    <ligand>
        <name>Mn(2+)</name>
        <dbReference type="ChEBI" id="CHEBI:29035"/>
    </ligand>
</feature>
<feature type="site" description="Cleavage" evidence="1">
    <location>
        <begin position="217"/>
        <end position="218"/>
    </location>
</feature>
<name>LTAS_STAAC</name>
<proteinExistence type="inferred from homology"/>